<comment type="function">
    <text evidence="1">Catalyzes the deamination of 5-methylthioadenosine and S-adenosyl-L-homocysteine into 5-methylthioinosine and S-inosyl-L-homocysteine, respectively. Is also able to deaminate adenosine.</text>
</comment>
<comment type="catalytic activity">
    <reaction evidence="1">
        <text>S-adenosyl-L-homocysteine + H2O + H(+) = S-inosyl-L-homocysteine + NH4(+)</text>
        <dbReference type="Rhea" id="RHEA:20716"/>
        <dbReference type="ChEBI" id="CHEBI:15377"/>
        <dbReference type="ChEBI" id="CHEBI:15378"/>
        <dbReference type="ChEBI" id="CHEBI:28938"/>
        <dbReference type="ChEBI" id="CHEBI:57856"/>
        <dbReference type="ChEBI" id="CHEBI:57985"/>
        <dbReference type="EC" id="3.5.4.28"/>
    </reaction>
</comment>
<comment type="catalytic activity">
    <reaction evidence="1">
        <text>S-methyl-5'-thioadenosine + H2O + H(+) = S-methyl-5'-thioinosine + NH4(+)</text>
        <dbReference type="Rhea" id="RHEA:25025"/>
        <dbReference type="ChEBI" id="CHEBI:15377"/>
        <dbReference type="ChEBI" id="CHEBI:15378"/>
        <dbReference type="ChEBI" id="CHEBI:17509"/>
        <dbReference type="ChEBI" id="CHEBI:28938"/>
        <dbReference type="ChEBI" id="CHEBI:48595"/>
        <dbReference type="EC" id="3.5.4.31"/>
    </reaction>
</comment>
<comment type="cofactor">
    <cofactor evidence="1">
        <name>Zn(2+)</name>
        <dbReference type="ChEBI" id="CHEBI:29105"/>
    </cofactor>
    <text evidence="1">Binds 1 zinc ion per subunit.</text>
</comment>
<comment type="similarity">
    <text evidence="1">Belongs to the metallo-dependent hydrolases superfamily. MTA/SAH deaminase family.</text>
</comment>
<dbReference type="EC" id="3.5.4.28" evidence="1"/>
<dbReference type="EC" id="3.5.4.31" evidence="1"/>
<dbReference type="EMBL" id="CP000141">
    <property type="protein sequence ID" value="ABB13872.1"/>
    <property type="molecule type" value="Genomic_DNA"/>
</dbReference>
<dbReference type="SMR" id="Q3AC64"/>
<dbReference type="FunCoup" id="Q3AC64">
    <property type="interactions" value="37"/>
</dbReference>
<dbReference type="STRING" id="246194.CHY_1438"/>
<dbReference type="KEGG" id="chy:CHY_1438"/>
<dbReference type="eggNOG" id="COG0402">
    <property type="taxonomic scope" value="Bacteria"/>
</dbReference>
<dbReference type="HOGENOM" id="CLU_012358_2_1_9"/>
<dbReference type="InParanoid" id="Q3AC64"/>
<dbReference type="OrthoDB" id="9807210at2"/>
<dbReference type="Proteomes" id="UP000002706">
    <property type="component" value="Chromosome"/>
</dbReference>
<dbReference type="GO" id="GO:0090614">
    <property type="term" value="F:5'-methylthioadenosine deaminase activity"/>
    <property type="evidence" value="ECO:0007669"/>
    <property type="project" value="UniProtKB-UniRule"/>
</dbReference>
<dbReference type="GO" id="GO:0046872">
    <property type="term" value="F:metal ion binding"/>
    <property type="evidence" value="ECO:0007669"/>
    <property type="project" value="UniProtKB-KW"/>
</dbReference>
<dbReference type="GO" id="GO:0050270">
    <property type="term" value="F:S-adenosylhomocysteine deaminase activity"/>
    <property type="evidence" value="ECO:0007669"/>
    <property type="project" value="UniProtKB-UniRule"/>
</dbReference>
<dbReference type="CDD" id="cd01298">
    <property type="entry name" value="ATZ_TRZ_like"/>
    <property type="match status" value="1"/>
</dbReference>
<dbReference type="FunFam" id="3.20.20.140:FF:000014">
    <property type="entry name" value="5-methylthioadenosine/S-adenosylhomocysteine deaminase"/>
    <property type="match status" value="1"/>
</dbReference>
<dbReference type="Gene3D" id="3.20.20.140">
    <property type="entry name" value="Metal-dependent hydrolases"/>
    <property type="match status" value="1"/>
</dbReference>
<dbReference type="Gene3D" id="2.30.40.10">
    <property type="entry name" value="Urease, subunit C, domain 1"/>
    <property type="match status" value="1"/>
</dbReference>
<dbReference type="HAMAP" id="MF_01281">
    <property type="entry name" value="MTA_SAH_deamin"/>
    <property type="match status" value="1"/>
</dbReference>
<dbReference type="InterPro" id="IPR006680">
    <property type="entry name" value="Amidohydro-rel"/>
</dbReference>
<dbReference type="InterPro" id="IPR023512">
    <property type="entry name" value="Deaminase_MtaD/DadD"/>
</dbReference>
<dbReference type="InterPro" id="IPR011059">
    <property type="entry name" value="Metal-dep_hydrolase_composite"/>
</dbReference>
<dbReference type="InterPro" id="IPR032466">
    <property type="entry name" value="Metal_Hydrolase"/>
</dbReference>
<dbReference type="InterPro" id="IPR050287">
    <property type="entry name" value="MTA/SAH_deaminase"/>
</dbReference>
<dbReference type="PANTHER" id="PTHR43794:SF11">
    <property type="entry name" value="AMIDOHYDROLASE-RELATED DOMAIN-CONTAINING PROTEIN"/>
    <property type="match status" value="1"/>
</dbReference>
<dbReference type="PANTHER" id="PTHR43794">
    <property type="entry name" value="AMINOHYDROLASE SSNA-RELATED"/>
    <property type="match status" value="1"/>
</dbReference>
<dbReference type="Pfam" id="PF01979">
    <property type="entry name" value="Amidohydro_1"/>
    <property type="match status" value="1"/>
</dbReference>
<dbReference type="SUPFAM" id="SSF51338">
    <property type="entry name" value="Composite domain of metallo-dependent hydrolases"/>
    <property type="match status" value="1"/>
</dbReference>
<dbReference type="SUPFAM" id="SSF51556">
    <property type="entry name" value="Metallo-dependent hydrolases"/>
    <property type="match status" value="1"/>
</dbReference>
<organism>
    <name type="scientific">Carboxydothermus hydrogenoformans (strain ATCC BAA-161 / DSM 6008 / Z-2901)</name>
    <dbReference type="NCBI Taxonomy" id="246194"/>
    <lineage>
        <taxon>Bacteria</taxon>
        <taxon>Bacillati</taxon>
        <taxon>Bacillota</taxon>
        <taxon>Clostridia</taxon>
        <taxon>Thermoanaerobacterales</taxon>
        <taxon>Thermoanaerobacteraceae</taxon>
        <taxon>Carboxydothermus</taxon>
    </lineage>
</organism>
<name>MTAD_CARHZ</name>
<accession>Q3AC64</accession>
<reference key="1">
    <citation type="journal article" date="2005" name="PLoS Genet.">
        <title>Life in hot carbon monoxide: the complete genome sequence of Carboxydothermus hydrogenoformans Z-2901.</title>
        <authorList>
            <person name="Wu M."/>
            <person name="Ren Q."/>
            <person name="Durkin A.S."/>
            <person name="Daugherty S.C."/>
            <person name="Brinkac L.M."/>
            <person name="Dodson R.J."/>
            <person name="Madupu R."/>
            <person name="Sullivan S.A."/>
            <person name="Kolonay J.F."/>
            <person name="Nelson W.C."/>
            <person name="Tallon L.J."/>
            <person name="Jones K.M."/>
            <person name="Ulrich L.E."/>
            <person name="Gonzalez J.M."/>
            <person name="Zhulin I.B."/>
            <person name="Robb F.T."/>
            <person name="Eisen J.A."/>
        </authorList>
    </citation>
    <scope>NUCLEOTIDE SEQUENCE [LARGE SCALE GENOMIC DNA]</scope>
    <source>
        <strain>ATCC BAA-161 / DSM 6008 / Z-2901</strain>
    </source>
</reference>
<evidence type="ECO:0000255" key="1">
    <source>
        <dbReference type="HAMAP-Rule" id="MF_01281"/>
    </source>
</evidence>
<keyword id="KW-0378">Hydrolase</keyword>
<keyword id="KW-0479">Metal-binding</keyword>
<keyword id="KW-1185">Reference proteome</keyword>
<keyword id="KW-0862">Zinc</keyword>
<proteinExistence type="inferred from homology"/>
<feature type="chain" id="PRO_0000312450" description="5-methylthioadenosine/S-adenosylhomocysteine deaminase">
    <location>
        <begin position="1"/>
        <end position="433"/>
    </location>
</feature>
<feature type="binding site" evidence="1">
    <location>
        <position position="67"/>
    </location>
    <ligand>
        <name>Zn(2+)</name>
        <dbReference type="ChEBI" id="CHEBI:29105"/>
    </ligand>
</feature>
<feature type="binding site" evidence="1">
    <location>
        <position position="69"/>
    </location>
    <ligand>
        <name>Zn(2+)</name>
        <dbReference type="ChEBI" id="CHEBI:29105"/>
    </ligand>
</feature>
<feature type="binding site" evidence="1">
    <location>
        <position position="96"/>
    </location>
    <ligand>
        <name>substrate</name>
    </ligand>
</feature>
<feature type="binding site" evidence="1">
    <location>
        <position position="148"/>
    </location>
    <ligand>
        <name>substrate</name>
    </ligand>
</feature>
<feature type="binding site" evidence="1">
    <location>
        <position position="187"/>
    </location>
    <ligand>
        <name>substrate</name>
    </ligand>
</feature>
<feature type="binding site" evidence="1">
    <location>
        <position position="214"/>
    </location>
    <ligand>
        <name>Zn(2+)</name>
        <dbReference type="ChEBI" id="CHEBI:29105"/>
    </ligand>
</feature>
<feature type="binding site" evidence="1">
    <location>
        <position position="217"/>
    </location>
    <ligand>
        <name>substrate</name>
    </ligand>
</feature>
<feature type="binding site" evidence="1">
    <location>
        <position position="302"/>
    </location>
    <ligand>
        <name>substrate</name>
    </ligand>
</feature>
<feature type="binding site" evidence="1">
    <location>
        <position position="302"/>
    </location>
    <ligand>
        <name>Zn(2+)</name>
        <dbReference type="ChEBI" id="CHEBI:29105"/>
    </ligand>
</feature>
<protein>
    <recommendedName>
        <fullName evidence="1">5-methylthioadenosine/S-adenosylhomocysteine deaminase</fullName>
        <shortName evidence="1">MTA/SAH deaminase</shortName>
        <ecNumber evidence="1">3.5.4.28</ecNumber>
        <ecNumber evidence="1">3.5.4.31</ecNumber>
    </recommendedName>
</protein>
<gene>
    <name evidence="1" type="primary">mtaD</name>
    <name type="ordered locus">CHY_1438</name>
</gene>
<sequence length="433" mass="47617">MVNELTILIKNTTVLDLNKFAAVENDILIEGNKISKIGVDIEVNDKENLKIIDGSNKVALPGLINGHTHVAMTLFRGASDDLPLMDWLNNVIWPSESRLTGEDVYWGSLLGIVEMIKSGTTTFCDMYFFMDEVAHAVEQSGIRAILSRGMVALDPENGEKGLKESIDFIEKWQGKANGRITTALAPHAPYTCPPEFLKDVIWEAKRLNVPINIHISETLDEISIIKERYGTTPVRHLESLGLFEVKTIGAHLVHVDDEEIQILKRYQVGAIHNPQSNMKLASGIAPVAKMLEAGVLVGLGTDGAASNNDLDMIEELRAASYLQKVSSMNPEALNAKTSIAMATSLGARALGLTEVGLLKEGYKADIILLNTNETNFYPRHNIFNLIAYSAKGADVDTVIVDGEIIMEKRQLTRLDEEKIKFEANKRGLKLVAG</sequence>